<dbReference type="EMBL" id="AE017221">
    <property type="protein sequence ID" value="AAS81056.1"/>
    <property type="status" value="ALT_INIT"/>
    <property type="molecule type" value="Genomic_DNA"/>
</dbReference>
<dbReference type="RefSeq" id="WP_008632496.1">
    <property type="nucleotide sequence ID" value="NC_005835.1"/>
</dbReference>
<dbReference type="PDB" id="4V63">
    <property type="method" value="X-ray"/>
    <property type="resolution" value="3.21 A"/>
    <property type="chains" value="B4/D4=2-71"/>
</dbReference>
<dbReference type="PDB" id="4V67">
    <property type="method" value="X-ray"/>
    <property type="resolution" value="3.00 A"/>
    <property type="chains" value="B4/D4=2-71"/>
</dbReference>
<dbReference type="PDB" id="4V7P">
    <property type="method" value="X-ray"/>
    <property type="resolution" value="3.62 A"/>
    <property type="chains" value="B1/C1=1-71"/>
</dbReference>
<dbReference type="PDB" id="4V83">
    <property type="method" value="X-ray"/>
    <property type="resolution" value="3.50 A"/>
    <property type="chains" value="B1/D1=10-39"/>
</dbReference>
<dbReference type="PDB" id="4V84">
    <property type="method" value="X-ray"/>
    <property type="resolution" value="3.40 A"/>
    <property type="chains" value="B1/D1=10-39"/>
</dbReference>
<dbReference type="PDB" id="4V9J">
    <property type="method" value="X-ray"/>
    <property type="resolution" value="3.86 A"/>
    <property type="chains" value="B4/D4=1-35"/>
</dbReference>
<dbReference type="PDB" id="4V9K">
    <property type="method" value="X-ray"/>
    <property type="resolution" value="3.50 A"/>
    <property type="chains" value="B4/D4=1-35"/>
</dbReference>
<dbReference type="PDB" id="4V9L">
    <property type="method" value="X-ray"/>
    <property type="resolution" value="3.50 A"/>
    <property type="chains" value="B4/D4=1-35"/>
</dbReference>
<dbReference type="PDB" id="4V9M">
    <property type="method" value="X-ray"/>
    <property type="resolution" value="4.00 A"/>
    <property type="chains" value="B4/D4=1-35"/>
</dbReference>
<dbReference type="PDB" id="4V9N">
    <property type="method" value="X-ray"/>
    <property type="resolution" value="3.40 A"/>
    <property type="chains" value="B4/D4=10-39"/>
</dbReference>
<dbReference type="PDB" id="4V9Q">
    <property type="method" value="X-ray"/>
    <property type="resolution" value="3.40 A"/>
    <property type="chains" value="A1/C1=10-39"/>
</dbReference>
<dbReference type="PDB" id="4W29">
    <property type="method" value="X-ray"/>
    <property type="resolution" value="3.80 A"/>
    <property type="chains" value="B4/D4=1-35"/>
</dbReference>
<dbReference type="PDB" id="4XEJ">
    <property type="method" value="X-ray"/>
    <property type="resolution" value="3.80 A"/>
    <property type="chains" value="AL31/BL31=10-39"/>
</dbReference>
<dbReference type="PDB" id="5J4D">
    <property type="method" value="X-ray"/>
    <property type="resolution" value="3.10 A"/>
    <property type="chains" value="BA/GC=1-71"/>
</dbReference>
<dbReference type="PDB" id="5V8I">
    <property type="method" value="X-ray"/>
    <property type="resolution" value="3.25 A"/>
    <property type="chains" value="14/24=1-71"/>
</dbReference>
<dbReference type="PDB" id="6B4V">
    <property type="method" value="X-ray"/>
    <property type="resolution" value="3.40 A"/>
    <property type="chains" value="BA/FC=1-71"/>
</dbReference>
<dbReference type="PDB" id="6BOH">
    <property type="method" value="X-ray"/>
    <property type="resolution" value="3.40 A"/>
    <property type="chains" value="BA/GC=1-71"/>
</dbReference>
<dbReference type="PDB" id="6BOK">
    <property type="method" value="X-ray"/>
    <property type="resolution" value="3.55 A"/>
    <property type="chains" value="BA/EC=1-71"/>
</dbReference>
<dbReference type="PDB" id="6N1D">
    <property type="method" value="X-ray"/>
    <property type="resolution" value="3.20 A"/>
    <property type="chains" value="AL31/BL31=1-71"/>
</dbReference>
<dbReference type="PDBsum" id="4V63"/>
<dbReference type="PDBsum" id="4V67"/>
<dbReference type="PDBsum" id="4V7P"/>
<dbReference type="PDBsum" id="4V83"/>
<dbReference type="PDBsum" id="4V84"/>
<dbReference type="PDBsum" id="4V9J"/>
<dbReference type="PDBsum" id="4V9K"/>
<dbReference type="PDBsum" id="4V9L"/>
<dbReference type="PDBsum" id="4V9M"/>
<dbReference type="PDBsum" id="4V9N"/>
<dbReference type="PDBsum" id="4V9Q"/>
<dbReference type="PDBsum" id="4W29"/>
<dbReference type="PDBsum" id="4XEJ"/>
<dbReference type="PDBsum" id="5J4D"/>
<dbReference type="PDBsum" id="5V8I"/>
<dbReference type="PDBsum" id="6B4V"/>
<dbReference type="PDBsum" id="6BOH"/>
<dbReference type="PDBsum" id="6BOK"/>
<dbReference type="PDBsum" id="6N1D"/>
<dbReference type="SMR" id="Q72JR0"/>
<dbReference type="IntAct" id="Q72JR0">
    <property type="interactions" value="4"/>
</dbReference>
<dbReference type="GeneID" id="3168247"/>
<dbReference type="KEGG" id="tth:TT_C0708"/>
<dbReference type="eggNOG" id="COG0254">
    <property type="taxonomic scope" value="Bacteria"/>
</dbReference>
<dbReference type="HOGENOM" id="CLU_114306_4_1_0"/>
<dbReference type="OrthoDB" id="9803251at2"/>
<dbReference type="Proteomes" id="UP000000592">
    <property type="component" value="Chromosome"/>
</dbReference>
<dbReference type="GO" id="GO:1990904">
    <property type="term" value="C:ribonucleoprotein complex"/>
    <property type="evidence" value="ECO:0007669"/>
    <property type="project" value="UniProtKB-KW"/>
</dbReference>
<dbReference type="GO" id="GO:0005840">
    <property type="term" value="C:ribosome"/>
    <property type="evidence" value="ECO:0007669"/>
    <property type="project" value="UniProtKB-KW"/>
</dbReference>
<dbReference type="GO" id="GO:0046872">
    <property type="term" value="F:metal ion binding"/>
    <property type="evidence" value="ECO:0007669"/>
    <property type="project" value="UniProtKB-KW"/>
</dbReference>
<dbReference type="GO" id="GO:0019843">
    <property type="term" value="F:rRNA binding"/>
    <property type="evidence" value="ECO:0007669"/>
    <property type="project" value="UniProtKB-KW"/>
</dbReference>
<dbReference type="GO" id="GO:0003735">
    <property type="term" value="F:structural constituent of ribosome"/>
    <property type="evidence" value="ECO:0007669"/>
    <property type="project" value="InterPro"/>
</dbReference>
<dbReference type="GO" id="GO:0006412">
    <property type="term" value="P:translation"/>
    <property type="evidence" value="ECO:0007669"/>
    <property type="project" value="UniProtKB-UniRule"/>
</dbReference>
<dbReference type="Gene3D" id="4.10.830.30">
    <property type="entry name" value="Ribosomal protein L31"/>
    <property type="match status" value="1"/>
</dbReference>
<dbReference type="HAMAP" id="MF_00501">
    <property type="entry name" value="Ribosomal_bL31_1"/>
    <property type="match status" value="1"/>
</dbReference>
<dbReference type="InterPro" id="IPR034704">
    <property type="entry name" value="Ribosomal_bL28/bL31-like_sf"/>
</dbReference>
<dbReference type="InterPro" id="IPR002150">
    <property type="entry name" value="Ribosomal_bL31"/>
</dbReference>
<dbReference type="InterPro" id="IPR027491">
    <property type="entry name" value="Ribosomal_bL31_A"/>
</dbReference>
<dbReference type="InterPro" id="IPR042105">
    <property type="entry name" value="Ribosomal_bL31_sf"/>
</dbReference>
<dbReference type="NCBIfam" id="TIGR00105">
    <property type="entry name" value="L31"/>
    <property type="match status" value="1"/>
</dbReference>
<dbReference type="NCBIfam" id="NF000612">
    <property type="entry name" value="PRK00019.1"/>
    <property type="match status" value="1"/>
</dbReference>
<dbReference type="NCBIfam" id="NF001809">
    <property type="entry name" value="PRK00528.1"/>
    <property type="match status" value="1"/>
</dbReference>
<dbReference type="PANTHER" id="PTHR33280">
    <property type="entry name" value="50S RIBOSOMAL PROTEIN L31, CHLOROPLASTIC"/>
    <property type="match status" value="1"/>
</dbReference>
<dbReference type="PANTHER" id="PTHR33280:SF1">
    <property type="entry name" value="LARGE RIBOSOMAL SUBUNIT PROTEIN BL31C"/>
    <property type="match status" value="1"/>
</dbReference>
<dbReference type="Pfam" id="PF01197">
    <property type="entry name" value="Ribosomal_L31"/>
    <property type="match status" value="1"/>
</dbReference>
<dbReference type="PRINTS" id="PR01249">
    <property type="entry name" value="RIBOSOMALL31"/>
</dbReference>
<dbReference type="SUPFAM" id="SSF143800">
    <property type="entry name" value="L28p-like"/>
    <property type="match status" value="1"/>
</dbReference>
<dbReference type="PROSITE" id="PS01143">
    <property type="entry name" value="RIBOSOMAL_L31"/>
    <property type="match status" value="1"/>
</dbReference>
<organism>
    <name type="scientific">Thermus thermophilus (strain ATCC BAA-163 / DSM 7039 / HB27)</name>
    <dbReference type="NCBI Taxonomy" id="262724"/>
    <lineage>
        <taxon>Bacteria</taxon>
        <taxon>Thermotogati</taxon>
        <taxon>Deinococcota</taxon>
        <taxon>Deinococci</taxon>
        <taxon>Thermales</taxon>
        <taxon>Thermaceae</taxon>
        <taxon>Thermus</taxon>
    </lineage>
</organism>
<name>RL31_THET2</name>
<protein>
    <recommendedName>
        <fullName evidence="1">Large ribosomal subunit protein bL31</fullName>
    </recommendedName>
    <alternativeName>
        <fullName evidence="2">50S ribosomal protein L31</fullName>
    </alternativeName>
</protein>
<evidence type="ECO:0000255" key="1">
    <source>
        <dbReference type="HAMAP-Rule" id="MF_00501"/>
    </source>
</evidence>
<evidence type="ECO:0000305" key="2"/>
<evidence type="ECO:0007829" key="3">
    <source>
        <dbReference type="PDB" id="4V67"/>
    </source>
</evidence>
<evidence type="ECO:0007829" key="4">
    <source>
        <dbReference type="PDB" id="4V9K"/>
    </source>
</evidence>
<keyword id="KW-0002">3D-structure</keyword>
<keyword id="KW-0479">Metal-binding</keyword>
<keyword id="KW-0687">Ribonucleoprotein</keyword>
<keyword id="KW-0689">Ribosomal protein</keyword>
<keyword id="KW-0694">RNA-binding</keyword>
<keyword id="KW-0699">rRNA-binding</keyword>
<keyword id="KW-0862">Zinc</keyword>
<gene>
    <name evidence="1" type="primary">rpmE</name>
    <name type="ordered locus">TT_C0708</name>
</gene>
<sequence>MKEGIHPKLVPARIICGCGNVIETYSTKPEIYVEVCSKCHPFYTGQQRFVDTEGRVERFQRRYGDSYRKGR</sequence>
<feature type="chain" id="PRO_0000173170" description="Large ribosomal subunit protein bL31">
    <location>
        <begin position="1"/>
        <end position="71"/>
    </location>
</feature>
<feature type="binding site" evidence="1">
    <location>
        <position position="16"/>
    </location>
    <ligand>
        <name>Zn(2+)</name>
        <dbReference type="ChEBI" id="CHEBI:29105"/>
    </ligand>
</feature>
<feature type="binding site" evidence="1">
    <location>
        <position position="18"/>
    </location>
    <ligand>
        <name>Zn(2+)</name>
        <dbReference type="ChEBI" id="CHEBI:29105"/>
    </ligand>
</feature>
<feature type="binding site" evidence="1">
    <location>
        <position position="36"/>
    </location>
    <ligand>
        <name>Zn(2+)</name>
        <dbReference type="ChEBI" id="CHEBI:29105"/>
    </ligand>
</feature>
<feature type="binding site" evidence="1">
    <location>
        <position position="39"/>
    </location>
    <ligand>
        <name>Zn(2+)</name>
        <dbReference type="ChEBI" id="CHEBI:29105"/>
    </ligand>
</feature>
<feature type="strand" evidence="4">
    <location>
        <begin position="3"/>
        <end position="5"/>
    </location>
</feature>
<feature type="strand" evidence="3">
    <location>
        <begin position="13"/>
        <end position="16"/>
    </location>
</feature>
<feature type="strand" evidence="3">
    <location>
        <begin position="19"/>
        <end position="23"/>
    </location>
</feature>
<feature type="strand" evidence="4">
    <location>
        <begin position="27"/>
        <end position="29"/>
    </location>
</feature>
<feature type="strand" evidence="3">
    <location>
        <begin position="31"/>
        <end position="35"/>
    </location>
</feature>
<proteinExistence type="evidence at protein level"/>
<reference key="1">
    <citation type="journal article" date="2004" name="Nat. Biotechnol.">
        <title>The genome sequence of the extreme thermophile Thermus thermophilus.</title>
        <authorList>
            <person name="Henne A."/>
            <person name="Brueggemann H."/>
            <person name="Raasch C."/>
            <person name="Wiezer A."/>
            <person name="Hartsch T."/>
            <person name="Liesegang H."/>
            <person name="Johann A."/>
            <person name="Lienard T."/>
            <person name="Gohl O."/>
            <person name="Martinez-Arias R."/>
            <person name="Jacobi C."/>
            <person name="Starkuviene V."/>
            <person name="Schlenczeck S."/>
            <person name="Dencker S."/>
            <person name="Huber R."/>
            <person name="Klenk H.-P."/>
            <person name="Kramer W."/>
            <person name="Merkl R."/>
            <person name="Gottschalk G."/>
            <person name="Fritz H.-J."/>
        </authorList>
    </citation>
    <scope>NUCLEOTIDE SEQUENCE [LARGE SCALE GENOMIC DNA]</scope>
    <source>
        <strain>ATCC BAA-163 / DSM 7039 / HB27</strain>
    </source>
</reference>
<accession>Q72JR0</accession>
<comment type="function">
    <text evidence="1">Binds the 23S rRNA.</text>
</comment>
<comment type="cofactor">
    <cofactor evidence="1">
        <name>Zn(2+)</name>
        <dbReference type="ChEBI" id="CHEBI:29105"/>
    </cofactor>
    <text evidence="1">Binds 1 zinc ion per subunit.</text>
</comment>
<comment type="subunit">
    <text evidence="1">Part of the 50S ribosomal subunit.</text>
</comment>
<comment type="similarity">
    <text evidence="1">Belongs to the bacterial ribosomal protein bL31 family. Type A subfamily.</text>
</comment>
<comment type="sequence caution" evidence="2">
    <conflict type="erroneous initiation">
        <sequence resource="EMBL-CDS" id="AAS81056"/>
    </conflict>
</comment>